<reference key="1">
    <citation type="submission" date="2005-06" db="EMBL/GenBank/DDBJ databases">
        <title>DNA sequences of macaque genes expressed in brain or testis and its evolutionary implications.</title>
        <authorList>
            <consortium name="International consortium for macaque cDNA sequencing and analysis"/>
        </authorList>
    </citation>
    <scope>NUCLEOTIDE SEQUENCE [LARGE SCALE MRNA]</scope>
    <source>
        <tissue>Testis</tissue>
    </source>
</reference>
<keyword id="KW-0007">Acetylation</keyword>
<keyword id="KW-0030">Aminoacyl-tRNA synthetase</keyword>
<keyword id="KW-0067">ATP-binding</keyword>
<keyword id="KW-0436">Ligase</keyword>
<keyword id="KW-0496">Mitochondrion</keyword>
<keyword id="KW-0547">Nucleotide-binding</keyword>
<keyword id="KW-0648">Protein biosynthesis</keyword>
<keyword id="KW-1185">Reference proteome</keyword>
<keyword id="KW-0694">RNA-binding</keyword>
<keyword id="KW-0809">Transit peptide</keyword>
<evidence type="ECO:0000250" key="1"/>
<evidence type="ECO:0000250" key="2">
    <source>
        <dbReference type="UniProtKB" id="Q5JPH6"/>
    </source>
</evidence>
<evidence type="ECO:0000250" key="3">
    <source>
        <dbReference type="UniProtKB" id="Q9CXJ1"/>
    </source>
</evidence>
<evidence type="ECO:0000255" key="4"/>
<evidence type="ECO:0000305" key="5"/>
<feature type="transit peptide" description="Mitochondrion" evidence="4">
    <location>
        <begin position="1"/>
        <end position="41"/>
    </location>
</feature>
<feature type="chain" id="PRO_0000254561" description="Nondiscriminating glutamyl-tRNA synthetase EARS2, mitochondrial">
    <location>
        <begin position="42"/>
        <end position="506"/>
    </location>
</feature>
<feature type="short sequence motif" description="'HIGH' region">
    <location>
        <begin position="45"/>
        <end position="53"/>
    </location>
</feature>
<feature type="short sequence motif" description="'KMSKS' region">
    <location>
        <begin position="284"/>
        <end position="288"/>
    </location>
</feature>
<feature type="binding site" evidence="1">
    <location>
        <begin position="40"/>
        <end position="42"/>
    </location>
    <ligand>
        <name>L-glutamate</name>
        <dbReference type="ChEBI" id="CHEBI:29985"/>
    </ligand>
</feature>
<feature type="binding site" evidence="1">
    <location>
        <position position="50"/>
    </location>
    <ligand>
        <name>ATP</name>
        <dbReference type="ChEBI" id="CHEBI:30616"/>
    </ligand>
</feature>
<feature type="binding site" evidence="1">
    <location>
        <position position="76"/>
    </location>
    <ligand>
        <name>L-glutamate</name>
        <dbReference type="ChEBI" id="CHEBI:29985"/>
    </ligand>
</feature>
<feature type="binding site" evidence="1">
    <location>
        <begin position="228"/>
        <end position="232"/>
    </location>
    <ligand>
        <name>L-glutamate</name>
        <dbReference type="ChEBI" id="CHEBI:29985"/>
    </ligand>
</feature>
<feature type="binding site" evidence="1">
    <location>
        <position position="246"/>
    </location>
    <ligand>
        <name>L-glutamate</name>
        <dbReference type="ChEBI" id="CHEBI:29985"/>
    </ligand>
</feature>
<feature type="binding site" evidence="1">
    <location>
        <position position="249"/>
    </location>
    <ligand>
        <name>ATP</name>
        <dbReference type="ChEBI" id="CHEBI:30616"/>
    </ligand>
</feature>
<feature type="binding site" evidence="1">
    <location>
        <begin position="284"/>
        <end position="288"/>
    </location>
    <ligand>
        <name>ATP</name>
        <dbReference type="ChEBI" id="CHEBI:30616"/>
    </ligand>
</feature>
<feature type="modified residue" description="N6-succinyllysine" evidence="3">
    <location>
        <position position="256"/>
    </location>
</feature>
<feature type="modified residue" description="N6-acetyllysine" evidence="2">
    <location>
        <position position="486"/>
    </location>
</feature>
<protein>
    <recommendedName>
        <fullName evidence="2">Nondiscriminating glutamyl-tRNA synthetase EARS2, mitochondrial</fullName>
        <ecNumber evidence="2">6.1.1.24</ecNumber>
    </recommendedName>
    <alternativeName>
        <fullName>Glutamate--tRNA(Gln) ligase EARS2, mitochondrial</fullName>
        <ecNumber evidence="2">6.1.1.17</ecNumber>
    </alternativeName>
    <alternativeName>
        <fullName>Glutamyl-tRNA synthetase</fullName>
        <shortName>GluRS</shortName>
    </alternativeName>
    <alternativeName>
        <fullName>Mitochondrial glutamyl-tRNA synthetase</fullName>
        <shortName>mtGluRS</shortName>
    </alternativeName>
</protein>
<accession>Q4R4F1</accession>
<gene>
    <name evidence="2" type="primary">EARS2</name>
    <name type="ORF">QtsA-10185</name>
</gene>
<comment type="function">
    <text evidence="2">Non-discriminating glutamyl-tRNA synthetase that catalyzes aminoacylation of both mitochondrial tRNA(Glu) and tRNA(Gln) and participates in RNA aminoacylation for mitochondrial protein translation. Attachs glutamate to tRNA(Glu) or tRNA(Gln) in a two-step reaction: glutamate is first activated by ATP to form Glu-AMP and then transferred to the acceptor end of tRNA(Glu) or tRNA(Gln). In vitro, cytoplasmic tRNA(Gln) is slightly glutamylated, but with low activity.</text>
</comment>
<comment type="catalytic activity">
    <reaction evidence="2">
        <text>tRNA(Glx) + L-glutamate + ATP = L-glutamyl-tRNA(Glx) + AMP + diphosphate</text>
        <dbReference type="Rhea" id="RHEA:18397"/>
        <dbReference type="Rhea" id="RHEA-COMP:9713"/>
        <dbReference type="Rhea" id="RHEA-COMP:9716"/>
        <dbReference type="ChEBI" id="CHEBI:29985"/>
        <dbReference type="ChEBI" id="CHEBI:30616"/>
        <dbReference type="ChEBI" id="CHEBI:33019"/>
        <dbReference type="ChEBI" id="CHEBI:78442"/>
        <dbReference type="ChEBI" id="CHEBI:78520"/>
        <dbReference type="ChEBI" id="CHEBI:456215"/>
        <dbReference type="EC" id="6.1.1.24"/>
    </reaction>
    <physiologicalReaction direction="left-to-right" evidence="2">
        <dbReference type="Rhea" id="RHEA:18398"/>
    </physiologicalReaction>
</comment>
<comment type="catalytic activity">
    <reaction evidence="2">
        <text>tRNA(Glu) + L-glutamate + ATP = L-glutamyl-tRNA(Glu) + AMP + diphosphate</text>
        <dbReference type="Rhea" id="RHEA:23540"/>
        <dbReference type="Rhea" id="RHEA-COMP:9663"/>
        <dbReference type="Rhea" id="RHEA-COMP:9680"/>
        <dbReference type="ChEBI" id="CHEBI:29985"/>
        <dbReference type="ChEBI" id="CHEBI:30616"/>
        <dbReference type="ChEBI" id="CHEBI:33019"/>
        <dbReference type="ChEBI" id="CHEBI:78442"/>
        <dbReference type="ChEBI" id="CHEBI:78520"/>
        <dbReference type="ChEBI" id="CHEBI:456215"/>
        <dbReference type="EC" id="6.1.1.17"/>
    </reaction>
    <physiologicalReaction direction="left-to-right" evidence="2">
        <dbReference type="Rhea" id="RHEA:23541"/>
    </physiologicalReaction>
</comment>
<comment type="catalytic activity">
    <reaction evidence="2">
        <text>tRNA(Gln) + L-glutamate + ATP = L-glutamyl-tRNA(Gln) + AMP + diphosphate</text>
        <dbReference type="Rhea" id="RHEA:64612"/>
        <dbReference type="Rhea" id="RHEA-COMP:9662"/>
        <dbReference type="Rhea" id="RHEA-COMP:9684"/>
        <dbReference type="ChEBI" id="CHEBI:29985"/>
        <dbReference type="ChEBI" id="CHEBI:30616"/>
        <dbReference type="ChEBI" id="CHEBI:33019"/>
        <dbReference type="ChEBI" id="CHEBI:78442"/>
        <dbReference type="ChEBI" id="CHEBI:78520"/>
        <dbReference type="ChEBI" id="CHEBI:456215"/>
    </reaction>
    <physiologicalReaction direction="left-to-right" evidence="2">
        <dbReference type="Rhea" id="RHEA:64613"/>
    </physiologicalReaction>
</comment>
<comment type="subcellular location">
    <subcellularLocation>
        <location evidence="2">Mitochondrion matrix</location>
    </subcellularLocation>
</comment>
<comment type="similarity">
    <text evidence="5">Belongs to the class-I aminoacyl-tRNA synthetase family. Glutamate--tRNA ligase type 1 subfamily.</text>
</comment>
<dbReference type="EC" id="6.1.1.24" evidence="2"/>
<dbReference type="EC" id="6.1.1.17" evidence="2"/>
<dbReference type="EMBL" id="AB178963">
    <property type="protein sequence ID" value="BAE02014.1"/>
    <property type="molecule type" value="mRNA"/>
</dbReference>
<dbReference type="RefSeq" id="NP_001270434.1">
    <property type="nucleotide sequence ID" value="NM_001283505.1"/>
</dbReference>
<dbReference type="SMR" id="Q4R4F1"/>
<dbReference type="STRING" id="9541.ENSMFAP00000006668"/>
<dbReference type="eggNOG" id="KOG1149">
    <property type="taxonomic scope" value="Eukaryota"/>
</dbReference>
<dbReference type="Proteomes" id="UP000233100">
    <property type="component" value="Unplaced"/>
</dbReference>
<dbReference type="GO" id="GO:0005759">
    <property type="term" value="C:mitochondrial matrix"/>
    <property type="evidence" value="ECO:0007669"/>
    <property type="project" value="UniProtKB-SubCell"/>
</dbReference>
<dbReference type="GO" id="GO:0005524">
    <property type="term" value="F:ATP binding"/>
    <property type="evidence" value="ECO:0007669"/>
    <property type="project" value="UniProtKB-KW"/>
</dbReference>
<dbReference type="GO" id="GO:0004818">
    <property type="term" value="F:glutamate-tRNA ligase activity"/>
    <property type="evidence" value="ECO:0007669"/>
    <property type="project" value="UniProtKB-EC"/>
</dbReference>
<dbReference type="GO" id="GO:0050561">
    <property type="term" value="F:glutamate-tRNA(Gln) ligase activity"/>
    <property type="evidence" value="ECO:0007669"/>
    <property type="project" value="RHEA"/>
</dbReference>
<dbReference type="GO" id="GO:0000049">
    <property type="term" value="F:tRNA binding"/>
    <property type="evidence" value="ECO:0007669"/>
    <property type="project" value="InterPro"/>
</dbReference>
<dbReference type="GO" id="GO:0008270">
    <property type="term" value="F:zinc ion binding"/>
    <property type="evidence" value="ECO:0007669"/>
    <property type="project" value="InterPro"/>
</dbReference>
<dbReference type="GO" id="GO:0006424">
    <property type="term" value="P:glutamyl-tRNA aminoacylation"/>
    <property type="evidence" value="ECO:0007669"/>
    <property type="project" value="InterPro"/>
</dbReference>
<dbReference type="CDD" id="cd00808">
    <property type="entry name" value="GluRS_core"/>
    <property type="match status" value="1"/>
</dbReference>
<dbReference type="FunFam" id="3.40.50.620:FF:000045">
    <property type="entry name" value="Glutamate--tRNA ligase, mitochondrial"/>
    <property type="match status" value="1"/>
</dbReference>
<dbReference type="Gene3D" id="3.40.50.620">
    <property type="entry name" value="HUPs"/>
    <property type="match status" value="1"/>
</dbReference>
<dbReference type="HAMAP" id="MF_00022">
    <property type="entry name" value="Glu_tRNA_synth_type1"/>
    <property type="match status" value="1"/>
</dbReference>
<dbReference type="InterPro" id="IPR001412">
    <property type="entry name" value="aa-tRNA-synth_I_CS"/>
</dbReference>
<dbReference type="InterPro" id="IPR008925">
    <property type="entry name" value="aa_tRNA-synth_I_cd-bd_sf"/>
</dbReference>
<dbReference type="InterPro" id="IPR004527">
    <property type="entry name" value="Glu-tRNA-ligase_bac/mito"/>
</dbReference>
<dbReference type="InterPro" id="IPR000924">
    <property type="entry name" value="Glu/Gln-tRNA-synth"/>
</dbReference>
<dbReference type="InterPro" id="IPR020058">
    <property type="entry name" value="Glu/Gln-tRNA-synth_Ib_cat-dom"/>
</dbReference>
<dbReference type="InterPro" id="IPR049940">
    <property type="entry name" value="GluQ/Sye"/>
</dbReference>
<dbReference type="InterPro" id="IPR033910">
    <property type="entry name" value="GluRS_core"/>
</dbReference>
<dbReference type="InterPro" id="IPR014729">
    <property type="entry name" value="Rossmann-like_a/b/a_fold"/>
</dbReference>
<dbReference type="NCBIfam" id="TIGR00464">
    <property type="entry name" value="gltX_bact"/>
    <property type="match status" value="1"/>
</dbReference>
<dbReference type="PANTHER" id="PTHR43311">
    <property type="entry name" value="GLUTAMATE--TRNA LIGASE"/>
    <property type="match status" value="1"/>
</dbReference>
<dbReference type="PANTHER" id="PTHR43311:SF2">
    <property type="entry name" value="GLUTAMATE--TRNA LIGASE, MITOCHONDRIAL-RELATED"/>
    <property type="match status" value="1"/>
</dbReference>
<dbReference type="Pfam" id="PF00749">
    <property type="entry name" value="tRNA-synt_1c"/>
    <property type="match status" value="1"/>
</dbReference>
<dbReference type="PRINTS" id="PR00987">
    <property type="entry name" value="TRNASYNTHGLU"/>
</dbReference>
<dbReference type="SUPFAM" id="SSF48163">
    <property type="entry name" value="An anticodon-binding domain of class I aminoacyl-tRNA synthetases"/>
    <property type="match status" value="1"/>
</dbReference>
<dbReference type="SUPFAM" id="SSF52374">
    <property type="entry name" value="Nucleotidylyl transferase"/>
    <property type="match status" value="1"/>
</dbReference>
<dbReference type="PROSITE" id="PS00178">
    <property type="entry name" value="AA_TRNA_LIGASE_I"/>
    <property type="match status" value="1"/>
</dbReference>
<sequence length="506" mass="56865">MAALLRRLLQRGRPLAASGRRVGRREARLGTGPGVAVRVRFAPSPTGFLHLGGLRTALYNYIFAKKYQGSFILRLEDTDQTRFVPGAAENIENMLEWAGIPPDESPRRGGPAGPYQQSQRLELYAQATEALLKTGAAYPCFCSPQRLELLKKEALRNHQMPRYDNRCRNMSQEQVAQKLAKDPKPAIRFRLEQAAPAFEDLVYGWNRHDVASVEGDPVIMKSDGFPTYHLACVVDDHHMGISHVLRGSEWLISTAKHLLLYQALGWHPPHFAHLPLLLNRDGSKLSKRQGDIFLEHFAAEGFLPDSLLDIITNCGSGFAENQMGRTLPELITQFNLTRVTCHSALLDLEKLPEFNRLHLQRLVNNESQRCQLVEKLQALVEEAFGSQLQNRDVLNPIYMERILLLRQGHICRLQDLVSPVYSYLWTRPSVGRAQLDAISEEVDVIAKRVLGLLERSGMSLTQDMLSGELKKLSEGLEGTKHSNVMKLLRVALSGQQALSSMFKVQG</sequence>
<name>SYEM_MACFA</name>
<proteinExistence type="evidence at transcript level"/>
<organism>
    <name type="scientific">Macaca fascicularis</name>
    <name type="common">Crab-eating macaque</name>
    <name type="synonym">Cynomolgus monkey</name>
    <dbReference type="NCBI Taxonomy" id="9541"/>
    <lineage>
        <taxon>Eukaryota</taxon>
        <taxon>Metazoa</taxon>
        <taxon>Chordata</taxon>
        <taxon>Craniata</taxon>
        <taxon>Vertebrata</taxon>
        <taxon>Euteleostomi</taxon>
        <taxon>Mammalia</taxon>
        <taxon>Eutheria</taxon>
        <taxon>Euarchontoglires</taxon>
        <taxon>Primates</taxon>
        <taxon>Haplorrhini</taxon>
        <taxon>Catarrhini</taxon>
        <taxon>Cercopithecidae</taxon>
        <taxon>Cercopithecinae</taxon>
        <taxon>Macaca</taxon>
    </lineage>
</organism>